<sequence length="387" mass="41403">MSKRDYYEVLGVAKTAGEAELKSAFRKLAMAYHPDRNPGDKEAEIKFKEVNEAYQTLSDDQKRAAYDRFGHAAFSQGGPGGPGFGADFGDFMSDIFDTFFGDARAGGAGPRGGGGRAGGRERGADLRYNLEISLEEAFTGKTETIRLPTSVTCEVCAGSGAKAGSKPRVCPTCGGYGRVRAAQGFFAIERTCPNCQGRGEIIDDPCAACGGAGRVTRERTLSVNVPAGVDDGLRIRLAGEGESGLRGGPAGDLYIFLSIKPHPFFQRDGADLFCRVPISMVTAALSGEITVPVIDGSHTTVRVPGGTQTNKQFRLKGKGMPVLRSRDVGDLYIQVFVETPQNLTKRQRELLQEFDQLGSQADNHPESAGFFSRVKEFFDGLSGSGRA</sequence>
<feature type="chain" id="PRO_1000164273" description="Chaperone protein DnaJ">
    <location>
        <begin position="1"/>
        <end position="387"/>
    </location>
</feature>
<feature type="domain" description="J" evidence="1">
    <location>
        <begin position="5"/>
        <end position="70"/>
    </location>
</feature>
<feature type="repeat" description="CXXCXGXG motif">
    <location>
        <begin position="153"/>
        <end position="160"/>
    </location>
</feature>
<feature type="repeat" description="CXXCXGXG motif">
    <location>
        <begin position="170"/>
        <end position="177"/>
    </location>
</feature>
<feature type="repeat" description="CXXCXGXG motif">
    <location>
        <begin position="192"/>
        <end position="199"/>
    </location>
</feature>
<feature type="repeat" description="CXXCXGXG motif">
    <location>
        <begin position="206"/>
        <end position="213"/>
    </location>
</feature>
<feature type="zinc finger region" description="CR-type" evidence="1">
    <location>
        <begin position="140"/>
        <end position="218"/>
    </location>
</feature>
<feature type="binding site" evidence="1">
    <location>
        <position position="153"/>
    </location>
    <ligand>
        <name>Zn(2+)</name>
        <dbReference type="ChEBI" id="CHEBI:29105"/>
        <label>1</label>
    </ligand>
</feature>
<feature type="binding site" evidence="1">
    <location>
        <position position="156"/>
    </location>
    <ligand>
        <name>Zn(2+)</name>
        <dbReference type="ChEBI" id="CHEBI:29105"/>
        <label>1</label>
    </ligand>
</feature>
<feature type="binding site" evidence="1">
    <location>
        <position position="170"/>
    </location>
    <ligand>
        <name>Zn(2+)</name>
        <dbReference type="ChEBI" id="CHEBI:29105"/>
        <label>2</label>
    </ligand>
</feature>
<feature type="binding site" evidence="1">
    <location>
        <position position="173"/>
    </location>
    <ligand>
        <name>Zn(2+)</name>
        <dbReference type="ChEBI" id="CHEBI:29105"/>
        <label>2</label>
    </ligand>
</feature>
<feature type="binding site" evidence="1">
    <location>
        <position position="192"/>
    </location>
    <ligand>
        <name>Zn(2+)</name>
        <dbReference type="ChEBI" id="CHEBI:29105"/>
        <label>2</label>
    </ligand>
</feature>
<feature type="binding site" evidence="1">
    <location>
        <position position="195"/>
    </location>
    <ligand>
        <name>Zn(2+)</name>
        <dbReference type="ChEBI" id="CHEBI:29105"/>
        <label>2</label>
    </ligand>
</feature>
<feature type="binding site" evidence="1">
    <location>
        <position position="206"/>
    </location>
    <ligand>
        <name>Zn(2+)</name>
        <dbReference type="ChEBI" id="CHEBI:29105"/>
        <label>1</label>
    </ligand>
</feature>
<feature type="binding site" evidence="1">
    <location>
        <position position="209"/>
    </location>
    <ligand>
        <name>Zn(2+)</name>
        <dbReference type="ChEBI" id="CHEBI:29105"/>
        <label>1</label>
    </ligand>
</feature>
<gene>
    <name evidence="1" type="primary">dnaJ</name>
    <name type="ordered locus">M446_6271</name>
</gene>
<evidence type="ECO:0000255" key="1">
    <source>
        <dbReference type="HAMAP-Rule" id="MF_01152"/>
    </source>
</evidence>
<protein>
    <recommendedName>
        <fullName evidence="1">Chaperone protein DnaJ</fullName>
    </recommendedName>
</protein>
<accession>B0U833</accession>
<reference key="1">
    <citation type="submission" date="2008-02" db="EMBL/GenBank/DDBJ databases">
        <title>Complete sequence of chromosome of Methylobacterium sp. 4-46.</title>
        <authorList>
            <consortium name="US DOE Joint Genome Institute"/>
            <person name="Copeland A."/>
            <person name="Lucas S."/>
            <person name="Lapidus A."/>
            <person name="Glavina del Rio T."/>
            <person name="Dalin E."/>
            <person name="Tice H."/>
            <person name="Bruce D."/>
            <person name="Goodwin L."/>
            <person name="Pitluck S."/>
            <person name="Chertkov O."/>
            <person name="Brettin T."/>
            <person name="Detter J.C."/>
            <person name="Han C."/>
            <person name="Kuske C.R."/>
            <person name="Schmutz J."/>
            <person name="Larimer F."/>
            <person name="Land M."/>
            <person name="Hauser L."/>
            <person name="Kyrpides N."/>
            <person name="Ivanova N."/>
            <person name="Marx C.J."/>
            <person name="Richardson P."/>
        </authorList>
    </citation>
    <scope>NUCLEOTIDE SEQUENCE [LARGE SCALE GENOMIC DNA]</scope>
    <source>
        <strain>4-46</strain>
    </source>
</reference>
<comment type="function">
    <text evidence="1">Participates actively in the response to hyperosmotic and heat shock by preventing the aggregation of stress-denatured proteins and by disaggregating proteins, also in an autonomous, DnaK-independent fashion. Unfolded proteins bind initially to DnaJ; upon interaction with the DnaJ-bound protein, DnaK hydrolyzes its bound ATP, resulting in the formation of a stable complex. GrpE releases ADP from DnaK; ATP binding to DnaK triggers the release of the substrate protein, thus completing the reaction cycle. Several rounds of ATP-dependent interactions between DnaJ, DnaK and GrpE are required for fully efficient folding. Also involved, together with DnaK and GrpE, in the DNA replication of plasmids through activation of initiation proteins.</text>
</comment>
<comment type="cofactor">
    <cofactor evidence="1">
        <name>Zn(2+)</name>
        <dbReference type="ChEBI" id="CHEBI:29105"/>
    </cofactor>
    <text evidence="1">Binds 2 Zn(2+) ions per monomer.</text>
</comment>
<comment type="subunit">
    <text evidence="1">Homodimer.</text>
</comment>
<comment type="subcellular location">
    <subcellularLocation>
        <location evidence="1">Cytoplasm</location>
    </subcellularLocation>
</comment>
<comment type="domain">
    <text evidence="1">The J domain is necessary and sufficient to stimulate DnaK ATPase activity. Zinc center 1 plays an important role in the autonomous, DnaK-independent chaperone activity of DnaJ. Zinc center 2 is essential for interaction with DnaK and for DnaJ activity.</text>
</comment>
<comment type="similarity">
    <text evidence="1">Belongs to the DnaJ family.</text>
</comment>
<name>DNAJ_METS4</name>
<proteinExistence type="inferred from homology"/>
<dbReference type="EMBL" id="CP000943">
    <property type="protein sequence ID" value="ACA20537.1"/>
    <property type="molecule type" value="Genomic_DNA"/>
</dbReference>
<dbReference type="RefSeq" id="WP_012335915.1">
    <property type="nucleotide sequence ID" value="NC_010511.1"/>
</dbReference>
<dbReference type="SMR" id="B0U833"/>
<dbReference type="STRING" id="426117.M446_6271"/>
<dbReference type="KEGG" id="met:M446_6271"/>
<dbReference type="eggNOG" id="COG0484">
    <property type="taxonomic scope" value="Bacteria"/>
</dbReference>
<dbReference type="HOGENOM" id="CLU_017633_0_7_5"/>
<dbReference type="GO" id="GO:0005737">
    <property type="term" value="C:cytoplasm"/>
    <property type="evidence" value="ECO:0007669"/>
    <property type="project" value="UniProtKB-SubCell"/>
</dbReference>
<dbReference type="GO" id="GO:0005524">
    <property type="term" value="F:ATP binding"/>
    <property type="evidence" value="ECO:0007669"/>
    <property type="project" value="InterPro"/>
</dbReference>
<dbReference type="GO" id="GO:0031072">
    <property type="term" value="F:heat shock protein binding"/>
    <property type="evidence" value="ECO:0007669"/>
    <property type="project" value="InterPro"/>
</dbReference>
<dbReference type="GO" id="GO:0051082">
    <property type="term" value="F:unfolded protein binding"/>
    <property type="evidence" value="ECO:0007669"/>
    <property type="project" value="UniProtKB-UniRule"/>
</dbReference>
<dbReference type="GO" id="GO:0008270">
    <property type="term" value="F:zinc ion binding"/>
    <property type="evidence" value="ECO:0007669"/>
    <property type="project" value="UniProtKB-UniRule"/>
</dbReference>
<dbReference type="GO" id="GO:0051085">
    <property type="term" value="P:chaperone cofactor-dependent protein refolding"/>
    <property type="evidence" value="ECO:0007669"/>
    <property type="project" value="TreeGrafter"/>
</dbReference>
<dbReference type="GO" id="GO:0006260">
    <property type="term" value="P:DNA replication"/>
    <property type="evidence" value="ECO:0007669"/>
    <property type="project" value="UniProtKB-KW"/>
</dbReference>
<dbReference type="GO" id="GO:0042026">
    <property type="term" value="P:protein refolding"/>
    <property type="evidence" value="ECO:0007669"/>
    <property type="project" value="TreeGrafter"/>
</dbReference>
<dbReference type="GO" id="GO:0009408">
    <property type="term" value="P:response to heat"/>
    <property type="evidence" value="ECO:0007669"/>
    <property type="project" value="InterPro"/>
</dbReference>
<dbReference type="CDD" id="cd06257">
    <property type="entry name" value="DnaJ"/>
    <property type="match status" value="1"/>
</dbReference>
<dbReference type="CDD" id="cd10747">
    <property type="entry name" value="DnaJ_C"/>
    <property type="match status" value="1"/>
</dbReference>
<dbReference type="CDD" id="cd10719">
    <property type="entry name" value="DnaJ_zf"/>
    <property type="match status" value="1"/>
</dbReference>
<dbReference type="FunFam" id="1.10.287.110:FF:000034">
    <property type="entry name" value="Chaperone protein DnaJ"/>
    <property type="match status" value="1"/>
</dbReference>
<dbReference type="FunFam" id="2.10.230.10:FF:000002">
    <property type="entry name" value="Molecular chaperone DnaJ"/>
    <property type="match status" value="1"/>
</dbReference>
<dbReference type="FunFam" id="2.60.260.20:FF:000004">
    <property type="entry name" value="Molecular chaperone DnaJ"/>
    <property type="match status" value="1"/>
</dbReference>
<dbReference type="Gene3D" id="1.10.287.110">
    <property type="entry name" value="DnaJ domain"/>
    <property type="match status" value="1"/>
</dbReference>
<dbReference type="Gene3D" id="2.10.230.10">
    <property type="entry name" value="Heat shock protein DnaJ, cysteine-rich domain"/>
    <property type="match status" value="1"/>
</dbReference>
<dbReference type="Gene3D" id="2.60.260.20">
    <property type="entry name" value="Urease metallochaperone UreE, N-terminal domain"/>
    <property type="match status" value="2"/>
</dbReference>
<dbReference type="HAMAP" id="MF_01152">
    <property type="entry name" value="DnaJ"/>
    <property type="match status" value="1"/>
</dbReference>
<dbReference type="InterPro" id="IPR012724">
    <property type="entry name" value="DnaJ"/>
</dbReference>
<dbReference type="InterPro" id="IPR002939">
    <property type="entry name" value="DnaJ_C"/>
</dbReference>
<dbReference type="InterPro" id="IPR001623">
    <property type="entry name" value="DnaJ_domain"/>
</dbReference>
<dbReference type="InterPro" id="IPR018253">
    <property type="entry name" value="DnaJ_domain_CS"/>
</dbReference>
<dbReference type="InterPro" id="IPR008971">
    <property type="entry name" value="HSP40/DnaJ_pept-bd"/>
</dbReference>
<dbReference type="InterPro" id="IPR001305">
    <property type="entry name" value="HSP_DnaJ_Cys-rich_dom"/>
</dbReference>
<dbReference type="InterPro" id="IPR036410">
    <property type="entry name" value="HSP_DnaJ_Cys-rich_dom_sf"/>
</dbReference>
<dbReference type="InterPro" id="IPR036869">
    <property type="entry name" value="J_dom_sf"/>
</dbReference>
<dbReference type="NCBIfam" id="TIGR02349">
    <property type="entry name" value="DnaJ_bact"/>
    <property type="match status" value="1"/>
</dbReference>
<dbReference type="NCBIfam" id="NF008035">
    <property type="entry name" value="PRK10767.1"/>
    <property type="match status" value="1"/>
</dbReference>
<dbReference type="PANTHER" id="PTHR43096:SF48">
    <property type="entry name" value="CHAPERONE PROTEIN DNAJ"/>
    <property type="match status" value="1"/>
</dbReference>
<dbReference type="PANTHER" id="PTHR43096">
    <property type="entry name" value="DNAJ HOMOLOG 1, MITOCHONDRIAL-RELATED"/>
    <property type="match status" value="1"/>
</dbReference>
<dbReference type="Pfam" id="PF00226">
    <property type="entry name" value="DnaJ"/>
    <property type="match status" value="1"/>
</dbReference>
<dbReference type="Pfam" id="PF01556">
    <property type="entry name" value="DnaJ_C"/>
    <property type="match status" value="1"/>
</dbReference>
<dbReference type="Pfam" id="PF00684">
    <property type="entry name" value="DnaJ_CXXCXGXG"/>
    <property type="match status" value="1"/>
</dbReference>
<dbReference type="PRINTS" id="PR00625">
    <property type="entry name" value="JDOMAIN"/>
</dbReference>
<dbReference type="SMART" id="SM00271">
    <property type="entry name" value="DnaJ"/>
    <property type="match status" value="1"/>
</dbReference>
<dbReference type="SUPFAM" id="SSF46565">
    <property type="entry name" value="Chaperone J-domain"/>
    <property type="match status" value="1"/>
</dbReference>
<dbReference type="SUPFAM" id="SSF57938">
    <property type="entry name" value="DnaJ/Hsp40 cysteine-rich domain"/>
    <property type="match status" value="1"/>
</dbReference>
<dbReference type="SUPFAM" id="SSF49493">
    <property type="entry name" value="HSP40/DnaJ peptide-binding domain"/>
    <property type="match status" value="2"/>
</dbReference>
<dbReference type="PROSITE" id="PS00636">
    <property type="entry name" value="DNAJ_1"/>
    <property type="match status" value="1"/>
</dbReference>
<dbReference type="PROSITE" id="PS50076">
    <property type="entry name" value="DNAJ_2"/>
    <property type="match status" value="1"/>
</dbReference>
<dbReference type="PROSITE" id="PS51188">
    <property type="entry name" value="ZF_CR"/>
    <property type="match status" value="1"/>
</dbReference>
<organism>
    <name type="scientific">Methylobacterium sp. (strain 4-46)</name>
    <dbReference type="NCBI Taxonomy" id="426117"/>
    <lineage>
        <taxon>Bacteria</taxon>
        <taxon>Pseudomonadati</taxon>
        <taxon>Pseudomonadota</taxon>
        <taxon>Alphaproteobacteria</taxon>
        <taxon>Hyphomicrobiales</taxon>
        <taxon>Methylobacteriaceae</taxon>
        <taxon>Methylobacterium</taxon>
    </lineage>
</organism>
<keyword id="KW-0143">Chaperone</keyword>
<keyword id="KW-0963">Cytoplasm</keyword>
<keyword id="KW-0235">DNA replication</keyword>
<keyword id="KW-0479">Metal-binding</keyword>
<keyword id="KW-0677">Repeat</keyword>
<keyword id="KW-0346">Stress response</keyword>
<keyword id="KW-0862">Zinc</keyword>
<keyword id="KW-0863">Zinc-finger</keyword>